<feature type="chain" id="PRO_0000387222" description="Ribosomal RNA small subunit methyltransferase H">
    <location>
        <begin position="1"/>
        <end position="320"/>
    </location>
</feature>
<feature type="binding site" evidence="1">
    <location>
        <begin position="42"/>
        <end position="44"/>
    </location>
    <ligand>
        <name>S-adenosyl-L-methionine</name>
        <dbReference type="ChEBI" id="CHEBI:59789"/>
    </ligand>
</feature>
<feature type="binding site" evidence="1">
    <location>
        <position position="62"/>
    </location>
    <ligand>
        <name>S-adenosyl-L-methionine</name>
        <dbReference type="ChEBI" id="CHEBI:59789"/>
    </ligand>
</feature>
<feature type="binding site" evidence="1">
    <location>
        <position position="86"/>
    </location>
    <ligand>
        <name>S-adenosyl-L-methionine</name>
        <dbReference type="ChEBI" id="CHEBI:59789"/>
    </ligand>
</feature>
<feature type="binding site" evidence="1">
    <location>
        <position position="108"/>
    </location>
    <ligand>
        <name>S-adenosyl-L-methionine</name>
        <dbReference type="ChEBI" id="CHEBI:59789"/>
    </ligand>
</feature>
<feature type="binding site" evidence="1">
    <location>
        <position position="115"/>
    </location>
    <ligand>
        <name>S-adenosyl-L-methionine</name>
        <dbReference type="ChEBI" id="CHEBI:59789"/>
    </ligand>
</feature>
<evidence type="ECO:0000255" key="1">
    <source>
        <dbReference type="HAMAP-Rule" id="MF_01007"/>
    </source>
</evidence>
<reference key="1">
    <citation type="journal article" date="2006" name="J. Bacteriol.">
        <title>Complete genome sequence of Yersinia pestis strains Antiqua and Nepal516: evidence of gene reduction in an emerging pathogen.</title>
        <authorList>
            <person name="Chain P.S.G."/>
            <person name="Hu P."/>
            <person name="Malfatti S.A."/>
            <person name="Radnedge L."/>
            <person name="Larimer F."/>
            <person name="Vergez L.M."/>
            <person name="Worsham P."/>
            <person name="Chu M.C."/>
            <person name="Andersen G.L."/>
        </authorList>
    </citation>
    <scope>NUCLEOTIDE SEQUENCE [LARGE SCALE GENOMIC DNA]</scope>
    <source>
        <strain>Nepal516</strain>
    </source>
</reference>
<reference key="2">
    <citation type="submission" date="2009-04" db="EMBL/GenBank/DDBJ databases">
        <title>Yersinia pestis Nepal516A whole genome shotgun sequencing project.</title>
        <authorList>
            <person name="Plunkett G. III"/>
            <person name="Anderson B.D."/>
            <person name="Baumler D.J."/>
            <person name="Burland V."/>
            <person name="Cabot E.L."/>
            <person name="Glasner J.D."/>
            <person name="Mau B."/>
            <person name="Neeno-Eckwall E."/>
            <person name="Perna N.T."/>
            <person name="Munk A.C."/>
            <person name="Tapia R."/>
            <person name="Green L.D."/>
            <person name="Rogers Y.C."/>
            <person name="Detter J.C."/>
            <person name="Bruce D.C."/>
            <person name="Brettin T.S."/>
        </authorList>
    </citation>
    <scope>NUCLEOTIDE SEQUENCE [LARGE SCALE GENOMIC DNA]</scope>
    <source>
        <strain>Nepal516</strain>
    </source>
</reference>
<keyword id="KW-0963">Cytoplasm</keyword>
<keyword id="KW-0489">Methyltransferase</keyword>
<keyword id="KW-0698">rRNA processing</keyword>
<keyword id="KW-0949">S-adenosyl-L-methionine</keyword>
<keyword id="KW-0808">Transferase</keyword>
<protein>
    <recommendedName>
        <fullName evidence="1">Ribosomal RNA small subunit methyltransferase H</fullName>
        <ecNumber evidence="1">2.1.1.199</ecNumber>
    </recommendedName>
    <alternativeName>
        <fullName evidence="1">16S rRNA m(4)C1402 methyltransferase</fullName>
    </alternativeName>
    <alternativeName>
        <fullName evidence="1">rRNA (cytosine-N(4)-)-methyltransferase RsmH</fullName>
    </alternativeName>
</protein>
<accession>Q1CMN5</accession>
<proteinExistence type="inferred from homology"/>
<organism>
    <name type="scientific">Yersinia pestis bv. Antiqua (strain Nepal516)</name>
    <dbReference type="NCBI Taxonomy" id="377628"/>
    <lineage>
        <taxon>Bacteria</taxon>
        <taxon>Pseudomonadati</taxon>
        <taxon>Pseudomonadota</taxon>
        <taxon>Gammaproteobacteria</taxon>
        <taxon>Enterobacterales</taxon>
        <taxon>Yersiniaceae</taxon>
        <taxon>Yersinia</taxon>
    </lineage>
</organism>
<name>RSMH_YERPN</name>
<comment type="function">
    <text evidence="1">Specifically methylates the N4 position of cytidine in position 1402 (C1402) of 16S rRNA.</text>
</comment>
<comment type="catalytic activity">
    <reaction evidence="1">
        <text>cytidine(1402) in 16S rRNA + S-adenosyl-L-methionine = N(4)-methylcytidine(1402) in 16S rRNA + S-adenosyl-L-homocysteine + H(+)</text>
        <dbReference type="Rhea" id="RHEA:42928"/>
        <dbReference type="Rhea" id="RHEA-COMP:10286"/>
        <dbReference type="Rhea" id="RHEA-COMP:10287"/>
        <dbReference type="ChEBI" id="CHEBI:15378"/>
        <dbReference type="ChEBI" id="CHEBI:57856"/>
        <dbReference type="ChEBI" id="CHEBI:59789"/>
        <dbReference type="ChEBI" id="CHEBI:74506"/>
        <dbReference type="ChEBI" id="CHEBI:82748"/>
        <dbReference type="EC" id="2.1.1.199"/>
    </reaction>
</comment>
<comment type="subcellular location">
    <subcellularLocation>
        <location evidence="1">Cytoplasm</location>
    </subcellularLocation>
</comment>
<comment type="similarity">
    <text evidence="1">Belongs to the methyltransferase superfamily. RsmH family.</text>
</comment>
<sequence length="320" mass="35590">MVDNNKTVDNNYKHTSVLLDEAVKGLNIRDNGIYIDGTFGRGGHSRLILSQLGPEGRLIAIDRDPEAIEAAKQITDPRFSIVHGPFSDLAHYVRDLDLVGRIDGILLDLGVSSPQLDDAERGFSFMRDGPLDMRMDPSRGLSAAEWLMKASADDIAWVLKTFGEERFAKRLAKAIVERNLTQPMTRTKELADLIANASPFRDKHKHPATRSFQAIRIYINSELEEIERALDGAHEVLAPEGRLSVISFHSLEDRIVKNFIRHHSRGPQVPAGLPLTEAQLRSMGGRTLKSVGKMMPGDAEIAENPRARSSVLRFAERIGE</sequence>
<dbReference type="EC" id="2.1.1.199" evidence="1"/>
<dbReference type="EMBL" id="CP000305">
    <property type="protein sequence ID" value="ABG16745.1"/>
    <property type="molecule type" value="Genomic_DNA"/>
</dbReference>
<dbReference type="EMBL" id="ACNQ01000006">
    <property type="protein sequence ID" value="EEO78201.1"/>
    <property type="molecule type" value="Genomic_DNA"/>
</dbReference>
<dbReference type="RefSeq" id="WP_002210442.1">
    <property type="nucleotide sequence ID" value="NZ_ACNQ01000006.1"/>
</dbReference>
<dbReference type="SMR" id="Q1CMN5"/>
<dbReference type="GeneID" id="57974068"/>
<dbReference type="KEGG" id="ypn:YPN_0413"/>
<dbReference type="HOGENOM" id="CLU_038422_2_0_6"/>
<dbReference type="Proteomes" id="UP000008936">
    <property type="component" value="Chromosome"/>
</dbReference>
<dbReference type="GO" id="GO:0005737">
    <property type="term" value="C:cytoplasm"/>
    <property type="evidence" value="ECO:0007669"/>
    <property type="project" value="UniProtKB-SubCell"/>
</dbReference>
<dbReference type="GO" id="GO:0071424">
    <property type="term" value="F:rRNA (cytosine-N4-)-methyltransferase activity"/>
    <property type="evidence" value="ECO:0007669"/>
    <property type="project" value="UniProtKB-UniRule"/>
</dbReference>
<dbReference type="GO" id="GO:0070475">
    <property type="term" value="P:rRNA base methylation"/>
    <property type="evidence" value="ECO:0007669"/>
    <property type="project" value="UniProtKB-UniRule"/>
</dbReference>
<dbReference type="FunFam" id="1.10.150.170:FF:000001">
    <property type="entry name" value="Ribosomal RNA small subunit methyltransferase H"/>
    <property type="match status" value="1"/>
</dbReference>
<dbReference type="Gene3D" id="1.10.150.170">
    <property type="entry name" value="Putative methyltransferase TM0872, insert domain"/>
    <property type="match status" value="1"/>
</dbReference>
<dbReference type="Gene3D" id="3.40.50.150">
    <property type="entry name" value="Vaccinia Virus protein VP39"/>
    <property type="match status" value="1"/>
</dbReference>
<dbReference type="HAMAP" id="MF_01007">
    <property type="entry name" value="16SrRNA_methyltr_H"/>
    <property type="match status" value="1"/>
</dbReference>
<dbReference type="InterPro" id="IPR002903">
    <property type="entry name" value="RsmH"/>
</dbReference>
<dbReference type="InterPro" id="IPR023397">
    <property type="entry name" value="SAM-dep_MeTrfase_MraW_recog"/>
</dbReference>
<dbReference type="InterPro" id="IPR029063">
    <property type="entry name" value="SAM-dependent_MTases_sf"/>
</dbReference>
<dbReference type="NCBIfam" id="TIGR00006">
    <property type="entry name" value="16S rRNA (cytosine(1402)-N(4))-methyltransferase RsmH"/>
    <property type="match status" value="1"/>
</dbReference>
<dbReference type="PANTHER" id="PTHR11265:SF0">
    <property type="entry name" value="12S RRNA N4-METHYLCYTIDINE METHYLTRANSFERASE"/>
    <property type="match status" value="1"/>
</dbReference>
<dbReference type="PANTHER" id="PTHR11265">
    <property type="entry name" value="S-ADENOSYL-METHYLTRANSFERASE MRAW"/>
    <property type="match status" value="1"/>
</dbReference>
<dbReference type="Pfam" id="PF01795">
    <property type="entry name" value="Methyltransf_5"/>
    <property type="match status" value="1"/>
</dbReference>
<dbReference type="PIRSF" id="PIRSF004486">
    <property type="entry name" value="MraW"/>
    <property type="match status" value="1"/>
</dbReference>
<dbReference type="SUPFAM" id="SSF81799">
    <property type="entry name" value="Putative methyltransferase TM0872, insert domain"/>
    <property type="match status" value="1"/>
</dbReference>
<dbReference type="SUPFAM" id="SSF53335">
    <property type="entry name" value="S-adenosyl-L-methionine-dependent methyltransferases"/>
    <property type="match status" value="1"/>
</dbReference>
<gene>
    <name evidence="1" type="primary">rsmH</name>
    <name type="synonym">mraW</name>
    <name type="ordered locus">YPN_0413</name>
    <name type="ORF">YP516_0427</name>
</gene>